<gene>
    <name type="ordered locus">MRA_2631</name>
</gene>
<reference key="1">
    <citation type="journal article" date="2008" name="PLoS ONE">
        <title>Genetic basis of virulence attenuation revealed by comparative genomic analysis of Mycobacterium tuberculosis strain H37Ra versus H37Rv.</title>
        <authorList>
            <person name="Zheng H."/>
            <person name="Lu L."/>
            <person name="Wang B."/>
            <person name="Pu S."/>
            <person name="Zhang X."/>
            <person name="Zhu G."/>
            <person name="Shi W."/>
            <person name="Zhang L."/>
            <person name="Wang H."/>
            <person name="Wang S."/>
            <person name="Zhao G."/>
            <person name="Zhang Y."/>
        </authorList>
    </citation>
    <scope>NUCLEOTIDE SEQUENCE [LARGE SCALE GENOMIC DNA]</scope>
    <source>
        <strain>ATCC 25177 / H37Ra</strain>
    </source>
</reference>
<evidence type="ECO:0000255" key="1">
    <source>
        <dbReference type="HAMAP-Rule" id="MF_00693"/>
    </source>
</evidence>
<sequence>MSGHSKWATTKHKKAVVDARRGKMFARLIKNIEVAARVGGGDPAGNPTLYDAIQKAKKSSVPNENIERARKRGAGEEAGGADWQTIMYEGYAPNGVAVLIECLTDNRNRAASEVRVAMTRNGGTMADPGSVSYLFSRKGVVTLEKNGLTEDDVLAAVLEAGAEDVNDLGDSFEVISEPAELVAVRSALQDAGIDYESAEASFQPSVSVPVDLDGARKVFKLVDALEDSDDVQNVWTNVDVSDEVLAALDDE</sequence>
<protein>
    <recommendedName>
        <fullName evidence="1">Probable transcriptional regulatory protein MRA_2631</fullName>
    </recommendedName>
</protein>
<keyword id="KW-0963">Cytoplasm</keyword>
<keyword id="KW-0238">DNA-binding</keyword>
<keyword id="KW-1185">Reference proteome</keyword>
<keyword id="KW-0804">Transcription</keyword>
<keyword id="KW-0805">Transcription regulation</keyword>
<comment type="subcellular location">
    <subcellularLocation>
        <location evidence="1">Cytoplasm</location>
    </subcellularLocation>
</comment>
<comment type="similarity">
    <text evidence="1">Belongs to the TACO1 family.</text>
</comment>
<feature type="chain" id="PRO_1000045342" description="Probable transcriptional regulatory protein MRA_2631">
    <location>
        <begin position="1"/>
        <end position="251"/>
    </location>
</feature>
<name>Y2631_MYCTA</name>
<accession>A5U5V4</accession>
<organism>
    <name type="scientific">Mycobacterium tuberculosis (strain ATCC 25177 / H37Ra)</name>
    <dbReference type="NCBI Taxonomy" id="419947"/>
    <lineage>
        <taxon>Bacteria</taxon>
        <taxon>Bacillati</taxon>
        <taxon>Actinomycetota</taxon>
        <taxon>Actinomycetes</taxon>
        <taxon>Mycobacteriales</taxon>
        <taxon>Mycobacteriaceae</taxon>
        <taxon>Mycobacterium</taxon>
        <taxon>Mycobacterium tuberculosis complex</taxon>
    </lineage>
</organism>
<proteinExistence type="inferred from homology"/>
<dbReference type="EMBL" id="CP000611">
    <property type="protein sequence ID" value="ABQ74404.1"/>
    <property type="molecule type" value="Genomic_DNA"/>
</dbReference>
<dbReference type="RefSeq" id="WP_003413464.1">
    <property type="nucleotide sequence ID" value="NZ_CP016972.1"/>
</dbReference>
<dbReference type="SMR" id="A5U5V4"/>
<dbReference type="KEGG" id="mra:MRA_2631"/>
<dbReference type="eggNOG" id="COG0217">
    <property type="taxonomic scope" value="Bacteria"/>
</dbReference>
<dbReference type="HOGENOM" id="CLU_062974_2_2_11"/>
<dbReference type="Proteomes" id="UP000001988">
    <property type="component" value="Chromosome"/>
</dbReference>
<dbReference type="GO" id="GO:0005829">
    <property type="term" value="C:cytosol"/>
    <property type="evidence" value="ECO:0007669"/>
    <property type="project" value="TreeGrafter"/>
</dbReference>
<dbReference type="GO" id="GO:0003677">
    <property type="term" value="F:DNA binding"/>
    <property type="evidence" value="ECO:0007669"/>
    <property type="project" value="UniProtKB-UniRule"/>
</dbReference>
<dbReference type="GO" id="GO:0006355">
    <property type="term" value="P:regulation of DNA-templated transcription"/>
    <property type="evidence" value="ECO:0007669"/>
    <property type="project" value="UniProtKB-UniRule"/>
</dbReference>
<dbReference type="FunFam" id="1.10.10.200:FF:000002">
    <property type="entry name" value="Probable transcriptional regulatory protein CLM62_37755"/>
    <property type="match status" value="1"/>
</dbReference>
<dbReference type="FunFam" id="3.30.70.980:FF:000006">
    <property type="entry name" value="Probable transcriptional regulatory protein J113_18170"/>
    <property type="match status" value="1"/>
</dbReference>
<dbReference type="Gene3D" id="1.10.10.200">
    <property type="match status" value="1"/>
</dbReference>
<dbReference type="Gene3D" id="3.30.70.980">
    <property type="match status" value="2"/>
</dbReference>
<dbReference type="HAMAP" id="MF_00693">
    <property type="entry name" value="Transcrip_reg_TACO1"/>
    <property type="match status" value="1"/>
</dbReference>
<dbReference type="InterPro" id="IPR017856">
    <property type="entry name" value="Integrase-like_N"/>
</dbReference>
<dbReference type="InterPro" id="IPR048300">
    <property type="entry name" value="TACO1_YebC-like_2nd/3rd_dom"/>
</dbReference>
<dbReference type="InterPro" id="IPR049083">
    <property type="entry name" value="TACO1_YebC_N"/>
</dbReference>
<dbReference type="InterPro" id="IPR002876">
    <property type="entry name" value="Transcrip_reg_TACO1-like"/>
</dbReference>
<dbReference type="InterPro" id="IPR026564">
    <property type="entry name" value="Transcrip_reg_TACO1-like_dom3"/>
</dbReference>
<dbReference type="InterPro" id="IPR029072">
    <property type="entry name" value="YebC-like"/>
</dbReference>
<dbReference type="NCBIfam" id="NF001030">
    <property type="entry name" value="PRK00110.1"/>
    <property type="match status" value="1"/>
</dbReference>
<dbReference type="NCBIfam" id="NF009044">
    <property type="entry name" value="PRK12378.1"/>
    <property type="match status" value="1"/>
</dbReference>
<dbReference type="NCBIfam" id="TIGR01033">
    <property type="entry name" value="YebC/PmpR family DNA-binding transcriptional regulator"/>
    <property type="match status" value="1"/>
</dbReference>
<dbReference type="PANTHER" id="PTHR12532:SF6">
    <property type="entry name" value="TRANSCRIPTIONAL REGULATORY PROTEIN YEBC-RELATED"/>
    <property type="match status" value="1"/>
</dbReference>
<dbReference type="PANTHER" id="PTHR12532">
    <property type="entry name" value="TRANSLATIONAL ACTIVATOR OF CYTOCHROME C OXIDASE 1"/>
    <property type="match status" value="1"/>
</dbReference>
<dbReference type="Pfam" id="PF20772">
    <property type="entry name" value="TACO1_YebC_N"/>
    <property type="match status" value="1"/>
</dbReference>
<dbReference type="Pfam" id="PF01709">
    <property type="entry name" value="Transcrip_reg"/>
    <property type="match status" value="1"/>
</dbReference>
<dbReference type="SUPFAM" id="SSF75625">
    <property type="entry name" value="YebC-like"/>
    <property type="match status" value="1"/>
</dbReference>